<feature type="chain" id="PRO_0000178221" description="dITP/XTP pyrophosphatase">
    <location>
        <begin position="1"/>
        <end position="197"/>
    </location>
</feature>
<feature type="active site" description="Proton acceptor" evidence="1">
    <location>
        <position position="69"/>
    </location>
</feature>
<feature type="binding site" evidence="1">
    <location>
        <begin position="8"/>
        <end position="13"/>
    </location>
    <ligand>
        <name>substrate</name>
    </ligand>
</feature>
<feature type="binding site" evidence="1">
    <location>
        <position position="40"/>
    </location>
    <ligand>
        <name>Mg(2+)</name>
        <dbReference type="ChEBI" id="CHEBI:18420"/>
    </ligand>
</feature>
<feature type="binding site" evidence="1">
    <location>
        <position position="69"/>
    </location>
    <ligand>
        <name>Mg(2+)</name>
        <dbReference type="ChEBI" id="CHEBI:18420"/>
    </ligand>
</feature>
<feature type="binding site" evidence="1">
    <location>
        <position position="70"/>
    </location>
    <ligand>
        <name>substrate</name>
    </ligand>
</feature>
<feature type="binding site" evidence="1">
    <location>
        <begin position="154"/>
        <end position="157"/>
    </location>
    <ligand>
        <name>substrate</name>
    </ligand>
</feature>
<feature type="binding site" evidence="1">
    <location>
        <position position="177"/>
    </location>
    <ligand>
        <name>substrate</name>
    </ligand>
</feature>
<feature type="binding site" evidence="1">
    <location>
        <begin position="182"/>
        <end position="183"/>
    </location>
    <ligand>
        <name>substrate</name>
    </ligand>
</feature>
<gene>
    <name type="primary">rdgB</name>
    <name type="ordered locus">SPA2966</name>
</gene>
<comment type="function">
    <text evidence="1">Pyrophosphatase that catalyzes the hydrolysis of nucleoside triphosphates to their monophosphate derivatives, with a high preference for the non-canonical purine nucleotides XTP (xanthosine triphosphate), dITP (deoxyinosine triphosphate) and ITP. Seems to function as a house-cleaning enzyme that removes non-canonical purine nucleotides from the nucleotide pool, thus preventing their incorporation into DNA/RNA and avoiding chromosomal lesions.</text>
</comment>
<comment type="catalytic activity">
    <reaction evidence="1">
        <text>XTP + H2O = XMP + diphosphate + H(+)</text>
        <dbReference type="Rhea" id="RHEA:28610"/>
        <dbReference type="ChEBI" id="CHEBI:15377"/>
        <dbReference type="ChEBI" id="CHEBI:15378"/>
        <dbReference type="ChEBI" id="CHEBI:33019"/>
        <dbReference type="ChEBI" id="CHEBI:57464"/>
        <dbReference type="ChEBI" id="CHEBI:61314"/>
        <dbReference type="EC" id="3.6.1.66"/>
    </reaction>
</comment>
<comment type="catalytic activity">
    <reaction evidence="1">
        <text>dITP + H2O = dIMP + diphosphate + H(+)</text>
        <dbReference type="Rhea" id="RHEA:28342"/>
        <dbReference type="ChEBI" id="CHEBI:15377"/>
        <dbReference type="ChEBI" id="CHEBI:15378"/>
        <dbReference type="ChEBI" id="CHEBI:33019"/>
        <dbReference type="ChEBI" id="CHEBI:61194"/>
        <dbReference type="ChEBI" id="CHEBI:61382"/>
        <dbReference type="EC" id="3.6.1.66"/>
    </reaction>
</comment>
<comment type="catalytic activity">
    <reaction evidence="1">
        <text>ITP + H2O = IMP + diphosphate + H(+)</text>
        <dbReference type="Rhea" id="RHEA:29399"/>
        <dbReference type="ChEBI" id="CHEBI:15377"/>
        <dbReference type="ChEBI" id="CHEBI:15378"/>
        <dbReference type="ChEBI" id="CHEBI:33019"/>
        <dbReference type="ChEBI" id="CHEBI:58053"/>
        <dbReference type="ChEBI" id="CHEBI:61402"/>
        <dbReference type="EC" id="3.6.1.66"/>
    </reaction>
</comment>
<comment type="cofactor">
    <cofactor evidence="1">
        <name>Mg(2+)</name>
        <dbReference type="ChEBI" id="CHEBI:18420"/>
    </cofactor>
    <text evidence="1">Binds 1 Mg(2+) ion per subunit.</text>
</comment>
<comment type="subunit">
    <text evidence="1">Homodimer.</text>
</comment>
<comment type="similarity">
    <text evidence="1">Belongs to the HAM1 NTPase family.</text>
</comment>
<name>IXTPA_SALPA</name>
<keyword id="KW-0378">Hydrolase</keyword>
<keyword id="KW-0460">Magnesium</keyword>
<keyword id="KW-0479">Metal-binding</keyword>
<keyword id="KW-0546">Nucleotide metabolism</keyword>
<keyword id="KW-0547">Nucleotide-binding</keyword>
<reference key="1">
    <citation type="journal article" date="2004" name="Nat. Genet.">
        <title>Comparison of genome degradation in Paratyphi A and Typhi, human-restricted serovars of Salmonella enterica that cause typhoid.</title>
        <authorList>
            <person name="McClelland M."/>
            <person name="Sanderson K.E."/>
            <person name="Clifton S.W."/>
            <person name="Latreille P."/>
            <person name="Porwollik S."/>
            <person name="Sabo A."/>
            <person name="Meyer R."/>
            <person name="Bieri T."/>
            <person name="Ozersky P."/>
            <person name="McLellan M."/>
            <person name="Harkins C.R."/>
            <person name="Wang C."/>
            <person name="Nguyen C."/>
            <person name="Berghoff A."/>
            <person name="Elliott G."/>
            <person name="Kohlberg S."/>
            <person name="Strong C."/>
            <person name="Du F."/>
            <person name="Carter J."/>
            <person name="Kremizki C."/>
            <person name="Layman D."/>
            <person name="Leonard S."/>
            <person name="Sun H."/>
            <person name="Fulton L."/>
            <person name="Nash W."/>
            <person name="Miner T."/>
            <person name="Minx P."/>
            <person name="Delehaunty K."/>
            <person name="Fronick C."/>
            <person name="Magrini V."/>
            <person name="Nhan M."/>
            <person name="Warren W."/>
            <person name="Florea L."/>
            <person name="Spieth J."/>
            <person name="Wilson R.K."/>
        </authorList>
    </citation>
    <scope>NUCLEOTIDE SEQUENCE [LARGE SCALE GENOMIC DNA]</scope>
    <source>
        <strain>ATCC 9150 / SARB42</strain>
    </source>
</reference>
<organism>
    <name type="scientific">Salmonella paratyphi A (strain ATCC 9150 / SARB42)</name>
    <dbReference type="NCBI Taxonomy" id="295319"/>
    <lineage>
        <taxon>Bacteria</taxon>
        <taxon>Pseudomonadati</taxon>
        <taxon>Pseudomonadota</taxon>
        <taxon>Gammaproteobacteria</taxon>
        <taxon>Enterobacterales</taxon>
        <taxon>Enterobacteriaceae</taxon>
        <taxon>Salmonella</taxon>
    </lineage>
</organism>
<accession>Q5PMK9</accession>
<dbReference type="EC" id="3.6.1.66" evidence="1"/>
<dbReference type="EMBL" id="CP000026">
    <property type="protein sequence ID" value="AAV78804.1"/>
    <property type="molecule type" value="Genomic_DNA"/>
</dbReference>
<dbReference type="RefSeq" id="WP_001174769.1">
    <property type="nucleotide sequence ID" value="NC_006511.1"/>
</dbReference>
<dbReference type="SMR" id="Q5PMK9"/>
<dbReference type="KEGG" id="spt:SPA2966"/>
<dbReference type="HOGENOM" id="CLU_082080_0_3_6"/>
<dbReference type="Proteomes" id="UP000008185">
    <property type="component" value="Chromosome"/>
</dbReference>
<dbReference type="GO" id="GO:0005829">
    <property type="term" value="C:cytosol"/>
    <property type="evidence" value="ECO:0007669"/>
    <property type="project" value="TreeGrafter"/>
</dbReference>
<dbReference type="GO" id="GO:0035870">
    <property type="term" value="F:dITP diphosphatase activity"/>
    <property type="evidence" value="ECO:0007669"/>
    <property type="project" value="RHEA"/>
</dbReference>
<dbReference type="GO" id="GO:0036220">
    <property type="term" value="F:ITP diphosphatase activity"/>
    <property type="evidence" value="ECO:0007669"/>
    <property type="project" value="UniProtKB-EC"/>
</dbReference>
<dbReference type="GO" id="GO:0046872">
    <property type="term" value="F:metal ion binding"/>
    <property type="evidence" value="ECO:0007669"/>
    <property type="project" value="UniProtKB-KW"/>
</dbReference>
<dbReference type="GO" id="GO:0000166">
    <property type="term" value="F:nucleotide binding"/>
    <property type="evidence" value="ECO:0007669"/>
    <property type="project" value="UniProtKB-KW"/>
</dbReference>
<dbReference type="GO" id="GO:0017111">
    <property type="term" value="F:ribonucleoside triphosphate phosphatase activity"/>
    <property type="evidence" value="ECO:0007669"/>
    <property type="project" value="InterPro"/>
</dbReference>
<dbReference type="GO" id="GO:0036222">
    <property type="term" value="F:XTP diphosphatase activity"/>
    <property type="evidence" value="ECO:0007669"/>
    <property type="project" value="RHEA"/>
</dbReference>
<dbReference type="GO" id="GO:0009117">
    <property type="term" value="P:nucleotide metabolic process"/>
    <property type="evidence" value="ECO:0007669"/>
    <property type="project" value="UniProtKB-KW"/>
</dbReference>
<dbReference type="GO" id="GO:0009146">
    <property type="term" value="P:purine nucleoside triphosphate catabolic process"/>
    <property type="evidence" value="ECO:0007669"/>
    <property type="project" value="UniProtKB-UniRule"/>
</dbReference>
<dbReference type="CDD" id="cd00515">
    <property type="entry name" value="HAM1"/>
    <property type="match status" value="1"/>
</dbReference>
<dbReference type="FunFam" id="3.90.950.10:FF:000001">
    <property type="entry name" value="dITP/XTP pyrophosphatase"/>
    <property type="match status" value="1"/>
</dbReference>
<dbReference type="Gene3D" id="3.90.950.10">
    <property type="match status" value="1"/>
</dbReference>
<dbReference type="HAMAP" id="MF_01405">
    <property type="entry name" value="Non_canon_purine_NTPase"/>
    <property type="match status" value="1"/>
</dbReference>
<dbReference type="InterPro" id="IPR020922">
    <property type="entry name" value="dITP/XTP_pyrophosphatase"/>
</dbReference>
<dbReference type="InterPro" id="IPR029001">
    <property type="entry name" value="ITPase-like_fam"/>
</dbReference>
<dbReference type="InterPro" id="IPR002637">
    <property type="entry name" value="RdgB/HAM1"/>
</dbReference>
<dbReference type="NCBIfam" id="NF011397">
    <property type="entry name" value="PRK14822.1"/>
    <property type="match status" value="1"/>
</dbReference>
<dbReference type="NCBIfam" id="TIGR00042">
    <property type="entry name" value="RdgB/HAM1 family non-canonical purine NTP pyrophosphatase"/>
    <property type="match status" value="1"/>
</dbReference>
<dbReference type="PANTHER" id="PTHR11067:SF9">
    <property type="entry name" value="INOSINE TRIPHOSPHATE PYROPHOSPHATASE"/>
    <property type="match status" value="1"/>
</dbReference>
<dbReference type="PANTHER" id="PTHR11067">
    <property type="entry name" value="INOSINE TRIPHOSPHATE PYROPHOSPHATASE/HAM1 PROTEIN"/>
    <property type="match status" value="1"/>
</dbReference>
<dbReference type="Pfam" id="PF01725">
    <property type="entry name" value="Ham1p_like"/>
    <property type="match status" value="1"/>
</dbReference>
<dbReference type="SUPFAM" id="SSF52972">
    <property type="entry name" value="ITPase-like"/>
    <property type="match status" value="1"/>
</dbReference>
<protein>
    <recommendedName>
        <fullName evidence="1">dITP/XTP pyrophosphatase</fullName>
        <ecNumber evidence="1">3.6.1.66</ecNumber>
    </recommendedName>
    <alternativeName>
        <fullName evidence="1">Non-canonical purine NTP pyrophosphatase</fullName>
    </alternativeName>
    <alternativeName>
        <fullName evidence="1">Non-standard purine NTP pyrophosphatase</fullName>
    </alternativeName>
    <alternativeName>
        <fullName evidence="1">Nucleoside-triphosphate diphosphatase</fullName>
    </alternativeName>
    <alternativeName>
        <fullName evidence="1">Nucleoside-triphosphate pyrophosphatase</fullName>
        <shortName evidence="1">NTPase</shortName>
    </alternativeName>
</protein>
<sequence length="197" mass="21033">MQKVVLATGNAGKVRELASLLSDFGLDVVAQTELGVDSAEETGLTFIENAILKARHAAKMTGLPAIADDSGLAVDVLGGAPGIYSARYSGENATDQQNLEKLLHTLRDVPDDKRQARFHCVLVYLRHAEDPTPIVCHGSWPGVITRQAAGNGGFGYDPIFFVPSEGKTAAELTREEKSAISHRGQALKLLLDALRNG</sequence>
<proteinExistence type="inferred from homology"/>
<evidence type="ECO:0000255" key="1">
    <source>
        <dbReference type="HAMAP-Rule" id="MF_01405"/>
    </source>
</evidence>